<feature type="initiator methionine" description="Removed" evidence="1">
    <location>
        <position position="1"/>
    </location>
</feature>
<feature type="chain" id="PRO_0000189379" description="Ferredoxin-2">
    <location>
        <begin position="2"/>
        <end position="105"/>
    </location>
</feature>
<feature type="domain" description="2Fe-2S ferredoxin-type" evidence="2">
    <location>
        <begin position="4"/>
        <end position="94"/>
    </location>
</feature>
<feature type="binding site" evidence="2">
    <location>
        <position position="40"/>
    </location>
    <ligand>
        <name>[2Fe-2S] cluster</name>
        <dbReference type="ChEBI" id="CHEBI:190135"/>
    </ligand>
</feature>
<feature type="binding site" evidence="2">
    <location>
        <position position="45"/>
    </location>
    <ligand>
        <name>[2Fe-2S] cluster</name>
        <dbReference type="ChEBI" id="CHEBI:190135"/>
    </ligand>
</feature>
<feature type="binding site" evidence="2">
    <location>
        <position position="48"/>
    </location>
    <ligand>
        <name>[2Fe-2S] cluster</name>
        <dbReference type="ChEBI" id="CHEBI:190135"/>
    </ligand>
</feature>
<feature type="binding site" evidence="2">
    <location>
        <position position="78"/>
    </location>
    <ligand>
        <name>[2Fe-2S] cluster</name>
        <dbReference type="ChEBI" id="CHEBI:190135"/>
    </ligand>
</feature>
<gene>
    <name type="primary">petF2</name>
    <name type="ordered locus">syc1175_c</name>
</gene>
<accession>P08451</accession>
<organism>
    <name type="scientific">Synechococcus sp. (strain ATCC 27144 / PCC 6301 / SAUG 1402/1)</name>
    <name type="common">Anacystis nidulans</name>
    <dbReference type="NCBI Taxonomy" id="269084"/>
    <lineage>
        <taxon>Bacteria</taxon>
        <taxon>Bacillati</taxon>
        <taxon>Cyanobacteriota</taxon>
        <taxon>Cyanophyceae</taxon>
        <taxon>Synechococcales</taxon>
        <taxon>Synechococcaceae</taxon>
        <taxon>Synechococcus</taxon>
    </lineage>
</organism>
<sequence length="105" mass="11132">MATYQVEVIYQGQSQTFTADSDQSVLDSAQAAGVDLPASCLTGVCTTCAARILSGEVDQPDAMGVGPEPAKQGYTLLCVAYPRSDLKIETHKEDELYALQFGQPG</sequence>
<proteinExistence type="inferred from homology"/>
<reference key="1">
    <citation type="journal article" date="1987" name="J. Mol. Biol.">
        <title>The organization and sequence of the genes for ATP synthase subunits in the cyanobacterium Synechococcus 6301. Support for an endosymbiotic origin of chloroplasts.</title>
        <authorList>
            <person name="Cozens A.L."/>
            <person name="Walker J.E."/>
        </authorList>
    </citation>
    <scope>NUCLEOTIDE SEQUENCE [GENOMIC DNA]</scope>
</reference>
<reference key="2">
    <citation type="journal article" date="1988" name="Biochem. J.">
        <title>Expression of a gene encoding a novel ferredoxin in the cyanobacterium Synechococcus 6301.</title>
        <authorList>
            <person name="Cozens A.L."/>
            <person name="Walker J.E."/>
        </authorList>
    </citation>
    <scope>NUCLEOTIDE SEQUENCE [GENOMIC DNA]</scope>
</reference>
<reference key="3">
    <citation type="journal article" date="2007" name="Photosyn. Res.">
        <title>Complete nucleotide sequence of the freshwater unicellular cyanobacterium Synechococcus elongatus PCC 6301 chromosome: gene content and organization.</title>
        <authorList>
            <person name="Sugita C."/>
            <person name="Ogata K."/>
            <person name="Shikata M."/>
            <person name="Jikuya H."/>
            <person name="Takano J."/>
            <person name="Furumichi M."/>
            <person name="Kanehisa M."/>
            <person name="Omata T."/>
            <person name="Sugiura M."/>
            <person name="Sugita M."/>
        </authorList>
    </citation>
    <scope>NUCLEOTIDE SEQUENCE [LARGE SCALE GENOMIC DNA]</scope>
    <source>
        <strain>ATCC 27144 / PCC 6301 / SAUG 1402/1</strain>
    </source>
</reference>
<name>FER2_SYNP6</name>
<protein>
    <recommendedName>
        <fullName>Ferredoxin-2</fullName>
    </recommendedName>
    <alternativeName>
        <fullName>Ferredoxin II</fullName>
    </alternativeName>
</protein>
<keyword id="KW-0001">2Fe-2S</keyword>
<keyword id="KW-0249">Electron transport</keyword>
<keyword id="KW-0408">Iron</keyword>
<keyword id="KW-0411">Iron-sulfur</keyword>
<keyword id="KW-0479">Metal-binding</keyword>
<keyword id="KW-0813">Transport</keyword>
<dbReference type="EMBL" id="X05302">
    <property type="protein sequence ID" value="CAA28930.1"/>
    <property type="molecule type" value="Genomic_DNA"/>
</dbReference>
<dbReference type="EMBL" id="AP008231">
    <property type="protein sequence ID" value="BAD79365.1"/>
    <property type="molecule type" value="Genomic_DNA"/>
</dbReference>
<dbReference type="PIR" id="S10833">
    <property type="entry name" value="FEYC2"/>
</dbReference>
<dbReference type="RefSeq" id="WP_011243487.1">
    <property type="nucleotide sequence ID" value="NZ_CP085785.1"/>
</dbReference>
<dbReference type="SMR" id="P08451"/>
<dbReference type="GeneID" id="72429154"/>
<dbReference type="KEGG" id="syc:syc1175_c"/>
<dbReference type="eggNOG" id="COG1018">
    <property type="taxonomic scope" value="Bacteria"/>
</dbReference>
<dbReference type="Proteomes" id="UP000001175">
    <property type="component" value="Chromosome"/>
</dbReference>
<dbReference type="GO" id="GO:0051537">
    <property type="term" value="F:2 iron, 2 sulfur cluster binding"/>
    <property type="evidence" value="ECO:0007669"/>
    <property type="project" value="UniProtKB-KW"/>
</dbReference>
<dbReference type="GO" id="GO:0009055">
    <property type="term" value="F:electron transfer activity"/>
    <property type="evidence" value="ECO:0007669"/>
    <property type="project" value="InterPro"/>
</dbReference>
<dbReference type="GO" id="GO:0046872">
    <property type="term" value="F:metal ion binding"/>
    <property type="evidence" value="ECO:0007669"/>
    <property type="project" value="UniProtKB-KW"/>
</dbReference>
<dbReference type="GO" id="GO:0022900">
    <property type="term" value="P:electron transport chain"/>
    <property type="evidence" value="ECO:0007669"/>
    <property type="project" value="InterPro"/>
</dbReference>
<dbReference type="CDD" id="cd00207">
    <property type="entry name" value="fer2"/>
    <property type="match status" value="1"/>
</dbReference>
<dbReference type="Gene3D" id="3.10.20.30">
    <property type="match status" value="1"/>
</dbReference>
<dbReference type="InterPro" id="IPR036010">
    <property type="entry name" value="2Fe-2S_ferredoxin-like_sf"/>
</dbReference>
<dbReference type="InterPro" id="IPR001041">
    <property type="entry name" value="2Fe-2S_ferredoxin-type"/>
</dbReference>
<dbReference type="InterPro" id="IPR006058">
    <property type="entry name" value="2Fe2S_fd_BS"/>
</dbReference>
<dbReference type="InterPro" id="IPR012675">
    <property type="entry name" value="Beta-grasp_dom_sf"/>
</dbReference>
<dbReference type="InterPro" id="IPR010241">
    <property type="entry name" value="Fd_pln"/>
</dbReference>
<dbReference type="NCBIfam" id="TIGR02008">
    <property type="entry name" value="fdx_plant"/>
    <property type="match status" value="1"/>
</dbReference>
<dbReference type="PANTHER" id="PTHR43112">
    <property type="entry name" value="FERREDOXIN"/>
    <property type="match status" value="1"/>
</dbReference>
<dbReference type="PANTHER" id="PTHR43112:SF10">
    <property type="entry name" value="FERREDOXIN C 2, CHLOROPLASTIC"/>
    <property type="match status" value="1"/>
</dbReference>
<dbReference type="Pfam" id="PF00111">
    <property type="entry name" value="Fer2"/>
    <property type="match status" value="1"/>
</dbReference>
<dbReference type="SUPFAM" id="SSF54292">
    <property type="entry name" value="2Fe-2S ferredoxin-like"/>
    <property type="match status" value="1"/>
</dbReference>
<dbReference type="PROSITE" id="PS00197">
    <property type="entry name" value="2FE2S_FER_1"/>
    <property type="match status" value="1"/>
</dbReference>
<dbReference type="PROSITE" id="PS51085">
    <property type="entry name" value="2FE2S_FER_2"/>
    <property type="match status" value="1"/>
</dbReference>
<comment type="function">
    <text>Ferredoxins are iron-sulfur proteins that transfer electrons in a wide variety of metabolic reactions.</text>
</comment>
<comment type="cofactor">
    <cofactor>
        <name>[2Fe-2S] cluster</name>
        <dbReference type="ChEBI" id="CHEBI:190135"/>
    </cofactor>
    <text>Binds 1 [2Fe-2S] cluster.</text>
</comment>
<comment type="subunit">
    <text evidence="1">Forms a complex with heterodimeric ferredoxin-thioredoxin reductase (FTR) and thioredoxin.</text>
</comment>
<comment type="similarity">
    <text evidence="3">Belongs to the 2Fe2S plant-type ferredoxin family.</text>
</comment>
<evidence type="ECO:0000250" key="1"/>
<evidence type="ECO:0000255" key="2">
    <source>
        <dbReference type="PROSITE-ProRule" id="PRU00465"/>
    </source>
</evidence>
<evidence type="ECO:0000305" key="3"/>